<organism>
    <name type="scientific">Methanocaldococcus jannaschii (strain ATCC 43067 / DSM 2661 / JAL-1 / JCM 10045 / NBRC 100440)</name>
    <name type="common">Methanococcus jannaschii</name>
    <dbReference type="NCBI Taxonomy" id="243232"/>
    <lineage>
        <taxon>Archaea</taxon>
        <taxon>Methanobacteriati</taxon>
        <taxon>Methanobacteriota</taxon>
        <taxon>Methanomada group</taxon>
        <taxon>Methanococci</taxon>
        <taxon>Methanococcales</taxon>
        <taxon>Methanocaldococcaceae</taxon>
        <taxon>Methanocaldococcus</taxon>
    </lineage>
</organism>
<dbReference type="EMBL" id="L77117">
    <property type="protein sequence ID" value="AAB98323.1"/>
    <property type="molecule type" value="Genomic_DNA"/>
</dbReference>
<dbReference type="PIR" id="G64341">
    <property type="entry name" value="G64341"/>
</dbReference>
<dbReference type="RefSeq" id="WP_010869833.1">
    <property type="nucleotide sequence ID" value="NC_000909.1"/>
</dbReference>
<dbReference type="SMR" id="Q57781"/>
<dbReference type="FunCoup" id="Q57781">
    <property type="interactions" value="5"/>
</dbReference>
<dbReference type="STRING" id="243232.MJ_0335"/>
<dbReference type="PaxDb" id="243232-MJ_0335"/>
<dbReference type="EnsemblBacteria" id="AAB98323">
    <property type="protein sequence ID" value="AAB98323"/>
    <property type="gene ID" value="MJ_0335"/>
</dbReference>
<dbReference type="GeneID" id="1451191"/>
<dbReference type="KEGG" id="mja:MJ_0335"/>
<dbReference type="eggNOG" id="arCOG09508">
    <property type="taxonomic scope" value="Archaea"/>
</dbReference>
<dbReference type="HOGENOM" id="CLU_1122625_0_0_2"/>
<dbReference type="InParanoid" id="Q57781"/>
<dbReference type="OrthoDB" id="62191at2157"/>
<dbReference type="Proteomes" id="UP000000805">
    <property type="component" value="Chromosome"/>
</dbReference>
<evidence type="ECO:0000256" key="1">
    <source>
        <dbReference type="SAM" id="MobiDB-lite"/>
    </source>
</evidence>
<protein>
    <recommendedName>
        <fullName>Uncharacterized protein MJ0335</fullName>
    </recommendedName>
</protein>
<keyword id="KW-1185">Reference proteome</keyword>
<name>Y335_METJA</name>
<gene>
    <name type="ordered locus">MJ0335</name>
</gene>
<accession>Q57781</accession>
<sequence>MQSIFLPVLNPTTIDGQEITEEWIKKYGPTLRGKPVNIDHNYYSNGNLAVGDVVDVYFNPEGNLYAHIRIFDEIYWRLVDNGIKIKGVSFEFNDDGVGEEGIMKGLALCLESDPKVDFARLVEGNYVLEVLASIKRDSMDTKTQEKTEPKKIKDMTEEEFEKFLHEKIEQILASHKKENEDKDKSDNEDDKVVEILASKMDELVAVNKSVLKQLEEIRKAQKEILASAPVPPSGSGNSGHRRANLGL</sequence>
<reference key="1">
    <citation type="journal article" date="1996" name="Science">
        <title>Complete genome sequence of the methanogenic archaeon, Methanococcus jannaschii.</title>
        <authorList>
            <person name="Bult C.J."/>
            <person name="White O."/>
            <person name="Olsen G.J."/>
            <person name="Zhou L."/>
            <person name="Fleischmann R.D."/>
            <person name="Sutton G.G."/>
            <person name="Blake J.A."/>
            <person name="FitzGerald L.M."/>
            <person name="Clayton R.A."/>
            <person name="Gocayne J.D."/>
            <person name="Kerlavage A.R."/>
            <person name="Dougherty B.A."/>
            <person name="Tomb J.-F."/>
            <person name="Adams M.D."/>
            <person name="Reich C.I."/>
            <person name="Overbeek R."/>
            <person name="Kirkness E.F."/>
            <person name="Weinstock K.G."/>
            <person name="Merrick J.M."/>
            <person name="Glodek A."/>
            <person name="Scott J.L."/>
            <person name="Geoghagen N.S.M."/>
            <person name="Weidman J.F."/>
            <person name="Fuhrmann J.L."/>
            <person name="Nguyen D."/>
            <person name="Utterback T.R."/>
            <person name="Kelley J.M."/>
            <person name="Peterson J.D."/>
            <person name="Sadow P.W."/>
            <person name="Hanna M.C."/>
            <person name="Cotton M.D."/>
            <person name="Roberts K.M."/>
            <person name="Hurst M.A."/>
            <person name="Kaine B.P."/>
            <person name="Borodovsky M."/>
            <person name="Klenk H.-P."/>
            <person name="Fraser C.M."/>
            <person name="Smith H.O."/>
            <person name="Woese C.R."/>
            <person name="Venter J.C."/>
        </authorList>
    </citation>
    <scope>NUCLEOTIDE SEQUENCE [LARGE SCALE GENOMIC DNA]</scope>
    <source>
        <strain>ATCC 43067 / DSM 2661 / JAL-1 / JCM 10045 / NBRC 100440</strain>
    </source>
</reference>
<feature type="chain" id="PRO_0000106805" description="Uncharacterized protein MJ0335">
    <location>
        <begin position="1"/>
        <end position="247"/>
    </location>
</feature>
<feature type="region of interest" description="Disordered" evidence="1">
    <location>
        <begin position="225"/>
        <end position="247"/>
    </location>
</feature>
<proteinExistence type="predicted"/>